<protein>
    <recommendedName>
        <fullName>Alcohol dehydrogenase 1</fullName>
        <ecNumber evidence="2">1.1.1.1</ecNumber>
    </recommendedName>
    <alternativeName>
        <fullName>Alcohol dehydrogenase I</fullName>
        <shortName>ADH I</shortName>
    </alternativeName>
</protein>
<dbReference type="EC" id="1.1.1.1" evidence="2"/>
<dbReference type="EMBL" id="M16196">
    <property type="protein sequence ID" value="AAA33291.1"/>
    <property type="molecule type" value="Genomic_DNA"/>
</dbReference>
<dbReference type="EMBL" id="AACD01000168">
    <property type="protein sequence ID" value="EAA64311.1"/>
    <property type="molecule type" value="Genomic_DNA"/>
</dbReference>
<dbReference type="EMBL" id="BN001307">
    <property type="protein sequence ID" value="CBF84526.1"/>
    <property type="molecule type" value="Genomic_DNA"/>
</dbReference>
<dbReference type="PIR" id="A29054">
    <property type="entry name" value="A29054"/>
</dbReference>
<dbReference type="RefSeq" id="XP_682248.1">
    <property type="nucleotide sequence ID" value="XM_677156.1"/>
</dbReference>
<dbReference type="SMR" id="P08843"/>
<dbReference type="FunCoup" id="P08843">
    <property type="interactions" value="852"/>
</dbReference>
<dbReference type="STRING" id="227321.P08843"/>
<dbReference type="EnsemblFungi" id="CBF84526">
    <property type="protein sequence ID" value="CBF84526"/>
    <property type="gene ID" value="ANIA_08979"/>
</dbReference>
<dbReference type="KEGG" id="ani:ANIA_08979"/>
<dbReference type="VEuPathDB" id="FungiDB:AN8979"/>
<dbReference type="eggNOG" id="KOG0023">
    <property type="taxonomic scope" value="Eukaryota"/>
</dbReference>
<dbReference type="HOGENOM" id="CLU_026673_20_1_1"/>
<dbReference type="InParanoid" id="P08843"/>
<dbReference type="OMA" id="AWFYDAC"/>
<dbReference type="OrthoDB" id="1879366at2759"/>
<dbReference type="Proteomes" id="UP000000560">
    <property type="component" value="Chromosome VII"/>
</dbReference>
<dbReference type="GO" id="GO:0005737">
    <property type="term" value="C:cytoplasm"/>
    <property type="evidence" value="ECO:0000318"/>
    <property type="project" value="GO_Central"/>
</dbReference>
<dbReference type="GO" id="GO:0005576">
    <property type="term" value="C:extracellular region"/>
    <property type="evidence" value="ECO:0007669"/>
    <property type="project" value="UniProtKB-SubCell"/>
</dbReference>
<dbReference type="GO" id="GO:0004022">
    <property type="term" value="F:alcohol dehydrogenase (NAD+) activity"/>
    <property type="evidence" value="ECO:0000314"/>
    <property type="project" value="AspGD"/>
</dbReference>
<dbReference type="GO" id="GO:0008270">
    <property type="term" value="F:zinc ion binding"/>
    <property type="evidence" value="ECO:0007669"/>
    <property type="project" value="InterPro"/>
</dbReference>
<dbReference type="GO" id="GO:0046187">
    <property type="term" value="P:acetaldehyde catabolic process"/>
    <property type="evidence" value="ECO:0000270"/>
    <property type="project" value="AspGD"/>
</dbReference>
<dbReference type="GO" id="GO:0097308">
    <property type="term" value="P:cellular response to farnesol"/>
    <property type="evidence" value="ECO:0000270"/>
    <property type="project" value="AspGD"/>
</dbReference>
<dbReference type="GO" id="GO:0006068">
    <property type="term" value="P:ethanol catabolic process"/>
    <property type="evidence" value="ECO:0000314"/>
    <property type="project" value="AspGD"/>
</dbReference>
<dbReference type="GO" id="GO:0006567">
    <property type="term" value="P:threonine catabolic process"/>
    <property type="evidence" value="ECO:0000315"/>
    <property type="project" value="AspGD"/>
</dbReference>
<dbReference type="CDD" id="cd08297">
    <property type="entry name" value="CAD3"/>
    <property type="match status" value="1"/>
</dbReference>
<dbReference type="FunFam" id="3.40.50.720:FF:000039">
    <property type="entry name" value="Alcohol dehydrogenase AdhP"/>
    <property type="match status" value="1"/>
</dbReference>
<dbReference type="FunFam" id="3.90.180.10:FF:000002">
    <property type="entry name" value="Alcohol dehydrogenase AdhP"/>
    <property type="match status" value="1"/>
</dbReference>
<dbReference type="Gene3D" id="3.90.180.10">
    <property type="entry name" value="Medium-chain alcohol dehydrogenases, catalytic domain"/>
    <property type="match status" value="1"/>
</dbReference>
<dbReference type="Gene3D" id="3.40.50.720">
    <property type="entry name" value="NAD(P)-binding Rossmann-like Domain"/>
    <property type="match status" value="1"/>
</dbReference>
<dbReference type="InterPro" id="IPR013149">
    <property type="entry name" value="ADH-like_C"/>
</dbReference>
<dbReference type="InterPro" id="IPR013154">
    <property type="entry name" value="ADH-like_N"/>
</dbReference>
<dbReference type="InterPro" id="IPR002328">
    <property type="entry name" value="ADH_Zn_CS"/>
</dbReference>
<dbReference type="InterPro" id="IPR011032">
    <property type="entry name" value="GroES-like_sf"/>
</dbReference>
<dbReference type="InterPro" id="IPR036291">
    <property type="entry name" value="NAD(P)-bd_dom_sf"/>
</dbReference>
<dbReference type="InterPro" id="IPR020843">
    <property type="entry name" value="PKS_ER"/>
</dbReference>
<dbReference type="InterPro" id="IPR001763">
    <property type="entry name" value="Rhodanese-like_dom"/>
</dbReference>
<dbReference type="PANTHER" id="PTHR42940">
    <property type="entry name" value="ALCOHOL DEHYDROGENASE 1-RELATED"/>
    <property type="match status" value="1"/>
</dbReference>
<dbReference type="PANTHER" id="PTHR42940:SF3">
    <property type="entry name" value="ALCOHOL DEHYDROGENASE 1-RELATED"/>
    <property type="match status" value="1"/>
</dbReference>
<dbReference type="Pfam" id="PF08240">
    <property type="entry name" value="ADH_N"/>
    <property type="match status" value="1"/>
</dbReference>
<dbReference type="Pfam" id="PF00107">
    <property type="entry name" value="ADH_zinc_N"/>
    <property type="match status" value="1"/>
</dbReference>
<dbReference type="SMART" id="SM00829">
    <property type="entry name" value="PKS_ER"/>
    <property type="match status" value="1"/>
</dbReference>
<dbReference type="SUPFAM" id="SSF50129">
    <property type="entry name" value="GroES-like"/>
    <property type="match status" value="1"/>
</dbReference>
<dbReference type="SUPFAM" id="SSF51735">
    <property type="entry name" value="NAD(P)-binding Rossmann-fold domains"/>
    <property type="match status" value="1"/>
</dbReference>
<dbReference type="PROSITE" id="PS00059">
    <property type="entry name" value="ADH_ZINC"/>
    <property type="match status" value="1"/>
</dbReference>
<name>ADH1_EMENI</name>
<reference key="1">
    <citation type="journal article" date="1987" name="Gene">
        <title>Comparison of the cis-acting control regions of two coordinately controlled genes involved in ethanol utilization in Aspergillus nidulans.</title>
        <authorList>
            <person name="Gwynne D.I."/>
            <person name="Buxton F.P."/>
            <person name="Sibley S."/>
            <person name="Davies R.W."/>
            <person name="Lockington R.A."/>
            <person name="Scazzocchio C."/>
            <person name="Sealy-Lewis H.M."/>
        </authorList>
    </citation>
    <scope>NUCLEOTIDE SEQUENCE [GENOMIC DNA]</scope>
</reference>
<reference key="2">
    <citation type="journal article" date="2005" name="Nature">
        <title>Sequencing of Aspergillus nidulans and comparative analysis with A. fumigatus and A. oryzae.</title>
        <authorList>
            <person name="Galagan J.E."/>
            <person name="Calvo S.E."/>
            <person name="Cuomo C."/>
            <person name="Ma L.-J."/>
            <person name="Wortman J.R."/>
            <person name="Batzoglou S."/>
            <person name="Lee S.-I."/>
            <person name="Bastuerkmen M."/>
            <person name="Spevak C.C."/>
            <person name="Clutterbuck J."/>
            <person name="Kapitonov V."/>
            <person name="Jurka J."/>
            <person name="Scazzocchio C."/>
            <person name="Farman M.L."/>
            <person name="Butler J."/>
            <person name="Purcell S."/>
            <person name="Harris S."/>
            <person name="Braus G.H."/>
            <person name="Draht O."/>
            <person name="Busch S."/>
            <person name="D'Enfert C."/>
            <person name="Bouchier C."/>
            <person name="Goldman G.H."/>
            <person name="Bell-Pedersen D."/>
            <person name="Griffiths-Jones S."/>
            <person name="Doonan J.H."/>
            <person name="Yu J."/>
            <person name="Vienken K."/>
            <person name="Pain A."/>
            <person name="Freitag M."/>
            <person name="Selker E.U."/>
            <person name="Archer D.B."/>
            <person name="Penalva M.A."/>
            <person name="Oakley B.R."/>
            <person name="Momany M."/>
            <person name="Tanaka T."/>
            <person name="Kumagai T."/>
            <person name="Asai K."/>
            <person name="Machida M."/>
            <person name="Nierman W.C."/>
            <person name="Denning D.W."/>
            <person name="Caddick M.X."/>
            <person name="Hynes M."/>
            <person name="Paoletti M."/>
            <person name="Fischer R."/>
            <person name="Miller B.L."/>
            <person name="Dyer P.S."/>
            <person name="Sachs M.S."/>
            <person name="Osmani S.A."/>
            <person name="Birren B.W."/>
        </authorList>
    </citation>
    <scope>NUCLEOTIDE SEQUENCE [LARGE SCALE GENOMIC DNA]</scope>
    <source>
        <strain>FGSC A4 / ATCC 38163 / CBS 112.46 / NRRL 194 / M139</strain>
    </source>
</reference>
<reference key="3">
    <citation type="journal article" date="2009" name="Fungal Genet. Biol.">
        <title>The 2008 update of the Aspergillus nidulans genome annotation: a community effort.</title>
        <authorList>
            <person name="Wortman J.R."/>
            <person name="Gilsenan J.M."/>
            <person name="Joardar V."/>
            <person name="Deegan J."/>
            <person name="Clutterbuck J."/>
            <person name="Andersen M.R."/>
            <person name="Archer D."/>
            <person name="Bencina M."/>
            <person name="Braus G."/>
            <person name="Coutinho P."/>
            <person name="von Dohren H."/>
            <person name="Doonan J."/>
            <person name="Driessen A.J."/>
            <person name="Durek P."/>
            <person name="Espeso E."/>
            <person name="Fekete E."/>
            <person name="Flipphi M."/>
            <person name="Estrada C.G."/>
            <person name="Geysens S."/>
            <person name="Goldman G."/>
            <person name="de Groot P.W."/>
            <person name="Hansen K."/>
            <person name="Harris S.D."/>
            <person name="Heinekamp T."/>
            <person name="Helmstaedt K."/>
            <person name="Henrissat B."/>
            <person name="Hofmann G."/>
            <person name="Homan T."/>
            <person name="Horio T."/>
            <person name="Horiuchi H."/>
            <person name="James S."/>
            <person name="Jones M."/>
            <person name="Karaffa L."/>
            <person name="Karanyi Z."/>
            <person name="Kato M."/>
            <person name="Keller N."/>
            <person name="Kelly D.E."/>
            <person name="Kiel J.A."/>
            <person name="Kim J.M."/>
            <person name="van der Klei I.J."/>
            <person name="Klis F.M."/>
            <person name="Kovalchuk A."/>
            <person name="Krasevec N."/>
            <person name="Kubicek C.P."/>
            <person name="Liu B."/>
            <person name="Maccabe A."/>
            <person name="Meyer V."/>
            <person name="Mirabito P."/>
            <person name="Miskei M."/>
            <person name="Mos M."/>
            <person name="Mullins J."/>
            <person name="Nelson D.R."/>
            <person name="Nielsen J."/>
            <person name="Oakley B.R."/>
            <person name="Osmani S.A."/>
            <person name="Pakula T."/>
            <person name="Paszewski A."/>
            <person name="Paulsen I."/>
            <person name="Pilsyk S."/>
            <person name="Pocsi I."/>
            <person name="Punt P.J."/>
            <person name="Ram A.F."/>
            <person name="Ren Q."/>
            <person name="Robellet X."/>
            <person name="Robson G."/>
            <person name="Seiboth B."/>
            <person name="van Solingen P."/>
            <person name="Specht T."/>
            <person name="Sun J."/>
            <person name="Taheri-Talesh N."/>
            <person name="Takeshita N."/>
            <person name="Ussery D."/>
            <person name="vanKuyk P.A."/>
            <person name="Visser H."/>
            <person name="van de Vondervoort P.J."/>
            <person name="de Vries R.P."/>
            <person name="Walton J."/>
            <person name="Xiang X."/>
            <person name="Xiong Y."/>
            <person name="Zeng A.P."/>
            <person name="Brandt B.W."/>
            <person name="Cornell M.J."/>
            <person name="van den Hondel C.A."/>
            <person name="Visser J."/>
            <person name="Oliver S.G."/>
            <person name="Turner G."/>
        </authorList>
    </citation>
    <scope>GENOME REANNOTATION</scope>
    <source>
        <strain>FGSC A4 / ATCC 38163 / CBS 112.46 / NRRL 194 / M139</strain>
    </source>
</reference>
<reference key="4">
    <citation type="journal article" date="2014" name="BMC Genomics">
        <title>Elucidating how the saprophytic fungus Aspergillus nidulans uses the plant polyester suberin as carbon source.</title>
        <authorList>
            <person name="Martins I."/>
            <person name="Hartmann D.O."/>
            <person name="Alves P.C."/>
            <person name="Martins C."/>
            <person name="Garcia H."/>
            <person name="Leclercq C.C."/>
            <person name="Ferreira R."/>
            <person name="He J."/>
            <person name="Renaut J."/>
            <person name="Becker J.D."/>
            <person name="Silva Pereira C."/>
        </authorList>
    </citation>
    <scope>SUBCELLULAR LOCATION</scope>
</reference>
<evidence type="ECO:0000250" key="1">
    <source>
        <dbReference type="UniProtKB" id="P00327"/>
    </source>
</evidence>
<evidence type="ECO:0000250" key="2">
    <source>
        <dbReference type="UniProtKB" id="P06525"/>
    </source>
</evidence>
<evidence type="ECO:0000269" key="3">
    <source>
    </source>
</evidence>
<evidence type="ECO:0000305" key="4"/>
<feature type="chain" id="PRO_0000160719" description="Alcohol dehydrogenase 1">
    <location>
        <begin position="1"/>
        <end position="350"/>
    </location>
</feature>
<feature type="binding site" evidence="2">
    <location>
        <position position="44"/>
    </location>
    <ligand>
        <name>Zn(2+)</name>
        <dbReference type="ChEBI" id="CHEBI:29105"/>
        <label>1</label>
        <note>catalytic</note>
    </ligand>
</feature>
<feature type="binding site" evidence="2">
    <location>
        <position position="46"/>
    </location>
    <ligand>
        <name>an alcohol</name>
        <dbReference type="ChEBI" id="CHEBI:30879"/>
    </ligand>
</feature>
<feature type="binding site" evidence="2">
    <location>
        <position position="46"/>
    </location>
    <ligand>
        <name>NAD(+)</name>
        <dbReference type="ChEBI" id="CHEBI:57540"/>
    </ligand>
</feature>
<feature type="binding site" evidence="2">
    <location>
        <position position="46"/>
    </location>
    <ligand>
        <name>Zn(2+)</name>
        <dbReference type="ChEBI" id="CHEBI:29105"/>
        <label>1</label>
        <note>catalytic</note>
    </ligand>
</feature>
<feature type="binding site" evidence="1">
    <location>
        <position position="67"/>
    </location>
    <ligand>
        <name>an alcohol</name>
        <dbReference type="ChEBI" id="CHEBI:30879"/>
    </ligand>
</feature>
<feature type="binding site" evidence="2">
    <location>
        <position position="67"/>
    </location>
    <ligand>
        <name>Zn(2+)</name>
        <dbReference type="ChEBI" id="CHEBI:29105"/>
        <label>1</label>
        <note>catalytic</note>
    </ligand>
</feature>
<feature type="binding site" evidence="2">
    <location>
        <position position="98"/>
    </location>
    <ligand>
        <name>Zn(2+)</name>
        <dbReference type="ChEBI" id="CHEBI:29105"/>
        <label>2</label>
    </ligand>
</feature>
<feature type="binding site" evidence="2">
    <location>
        <position position="101"/>
    </location>
    <ligand>
        <name>Zn(2+)</name>
        <dbReference type="ChEBI" id="CHEBI:29105"/>
        <label>2</label>
    </ligand>
</feature>
<feature type="binding site" evidence="2">
    <location>
        <position position="104"/>
    </location>
    <ligand>
        <name>Zn(2+)</name>
        <dbReference type="ChEBI" id="CHEBI:29105"/>
        <label>2</label>
    </ligand>
</feature>
<feature type="binding site" evidence="2">
    <location>
        <position position="112"/>
    </location>
    <ligand>
        <name>Zn(2+)</name>
        <dbReference type="ChEBI" id="CHEBI:29105"/>
        <label>2</label>
    </ligand>
</feature>
<feature type="binding site" evidence="2">
    <location>
        <position position="154"/>
    </location>
    <ligand>
        <name>Zn(2+)</name>
        <dbReference type="ChEBI" id="CHEBI:29105"/>
        <label>1</label>
        <note>catalytic</note>
    </ligand>
</feature>
<feature type="binding site" evidence="2">
    <location>
        <begin position="178"/>
        <end position="182"/>
    </location>
    <ligand>
        <name>NAD(+)</name>
        <dbReference type="ChEBI" id="CHEBI:57540"/>
    </ligand>
</feature>
<feature type="binding site" evidence="2">
    <location>
        <position position="202"/>
    </location>
    <ligand>
        <name>NAD(+)</name>
        <dbReference type="ChEBI" id="CHEBI:57540"/>
    </ligand>
</feature>
<feature type="binding site" evidence="2">
    <location>
        <position position="207"/>
    </location>
    <ligand>
        <name>NAD(+)</name>
        <dbReference type="ChEBI" id="CHEBI:57540"/>
    </ligand>
</feature>
<feature type="binding site" evidence="1">
    <location>
        <begin position="271"/>
        <end position="273"/>
    </location>
    <ligand>
        <name>NAD(+)</name>
        <dbReference type="ChEBI" id="CHEBI:57540"/>
    </ligand>
</feature>
<feature type="binding site" evidence="2">
    <location>
        <position position="343"/>
    </location>
    <ligand>
        <name>NAD(+)</name>
        <dbReference type="ChEBI" id="CHEBI:57540"/>
    </ligand>
</feature>
<feature type="sequence conflict" description="In Ref. 1; AAA33291." evidence="4" ref="1">
    <original>S</original>
    <variation>C</variation>
    <location>
        <position position="2"/>
    </location>
</feature>
<feature type="sequence conflict" description="In Ref. 1; AAA33291." evidence="4" ref="1">
    <original>L</original>
    <variation>V</variation>
    <location>
        <position position="146"/>
    </location>
</feature>
<feature type="sequence conflict" description="In Ref. 1; AAA33291." evidence="4" ref="1">
    <original>KAATPDG</original>
    <variation>RHGRGC</variation>
    <location>
        <begin position="233"/>
        <end position="239"/>
    </location>
</feature>
<keyword id="KW-0963">Cytoplasm</keyword>
<keyword id="KW-0479">Metal-binding</keyword>
<keyword id="KW-0520">NAD</keyword>
<keyword id="KW-0560">Oxidoreductase</keyword>
<keyword id="KW-1185">Reference proteome</keyword>
<keyword id="KW-0964">Secreted</keyword>
<keyword id="KW-0862">Zinc</keyword>
<accession>P08843</accession>
<accession>C8VL73</accession>
<accession>Q5ARV1</accession>
<organism>
    <name type="scientific">Emericella nidulans (strain FGSC A4 / ATCC 38163 / CBS 112.46 / NRRL 194 / M139)</name>
    <name type="common">Aspergillus nidulans</name>
    <dbReference type="NCBI Taxonomy" id="227321"/>
    <lineage>
        <taxon>Eukaryota</taxon>
        <taxon>Fungi</taxon>
        <taxon>Dikarya</taxon>
        <taxon>Ascomycota</taxon>
        <taxon>Pezizomycotina</taxon>
        <taxon>Eurotiomycetes</taxon>
        <taxon>Eurotiomycetidae</taxon>
        <taxon>Eurotiales</taxon>
        <taxon>Aspergillaceae</taxon>
        <taxon>Aspergillus</taxon>
        <taxon>Aspergillus subgen. Nidulantes</taxon>
    </lineage>
</organism>
<sequence length="350" mass="37153">MSIPTMQWAQVAEKVGGPLVYKQIPVPKPGPDQILVKIRYSGVCHTDLHAMMGHWPIPVKMPLVGGHEGAGIVVAKGELVHEFEIGDQAGIKWLNGSCGECEFCRQSDDPLCARAQLSGYTVDGTFQQYALGKASHASKIPAGVPLDAAAPVLCAGITVYKGLKEAGVRPGQTVAIVGAGGGLGSLAQQYAKAMGIRVVAVDGGDEKRAMCESLGTETYVDFTKSKDLVADVKAATPDGLGAHAVILLAVSEKPFQQATEYVRSRGTIVAIGLPPDAYLKAPVINTVVRMITIKGSYVGNRQDGVEALDFFARGLIKAPFKTAPLKDLPKIYELMEQGRIAGRYVLEMPE</sequence>
<proteinExistence type="inferred from homology"/>
<gene>
    <name type="primary">alcA</name>
    <name type="ORF">AN8979</name>
</gene>
<comment type="catalytic activity">
    <reaction evidence="2">
        <text>a primary alcohol + NAD(+) = an aldehyde + NADH + H(+)</text>
        <dbReference type="Rhea" id="RHEA:10736"/>
        <dbReference type="ChEBI" id="CHEBI:15378"/>
        <dbReference type="ChEBI" id="CHEBI:15734"/>
        <dbReference type="ChEBI" id="CHEBI:17478"/>
        <dbReference type="ChEBI" id="CHEBI:57540"/>
        <dbReference type="ChEBI" id="CHEBI:57945"/>
        <dbReference type="EC" id="1.1.1.1"/>
    </reaction>
</comment>
<comment type="catalytic activity">
    <reaction evidence="2">
        <text>a secondary alcohol + NAD(+) = a ketone + NADH + H(+)</text>
        <dbReference type="Rhea" id="RHEA:10740"/>
        <dbReference type="ChEBI" id="CHEBI:15378"/>
        <dbReference type="ChEBI" id="CHEBI:17087"/>
        <dbReference type="ChEBI" id="CHEBI:35681"/>
        <dbReference type="ChEBI" id="CHEBI:57540"/>
        <dbReference type="ChEBI" id="CHEBI:57945"/>
        <dbReference type="EC" id="1.1.1.1"/>
    </reaction>
</comment>
<comment type="cofactor">
    <cofactor>
        <name>Zn(2+)</name>
        <dbReference type="ChEBI" id="CHEBI:29105"/>
    </cofactor>
    <text evidence="2">Binds 2 Zn(2+) ions per subunit.</text>
</comment>
<comment type="subunit">
    <text>Homotetramer.</text>
</comment>
<comment type="subcellular location">
    <subcellularLocation>
        <location evidence="2">Cytoplasm</location>
    </subcellularLocation>
    <subcellularLocation>
        <location evidence="3">Secreted</location>
    </subcellularLocation>
</comment>
<comment type="similarity">
    <text evidence="4">Belongs to the zinc-containing alcohol dehydrogenase family.</text>
</comment>